<sequence length="326" mass="36564">MNRHADVPVIDISGLSGNDMDVKKDIAARIDRACRGSGFFYAANHGVDLAALQKFTTDWHMAMSPEEKWELAIRAYNPANPRNRNGYYMAVEGKKANESFCYLNPSFDADHATIKAGLPSHEVNIWPDEARHPGMRRFYEAYFSDVFDVAAVILRGFAIALGREESFFERHFSMDDTLSAVSLIRYPFLENYPPLKLGPDGEKLSFEHHQDVSLITVLYQTAIPNLQVETAEGYLDIPVSDEHFLVNCGTYMAHITNGYYPAPVHRVKYINAERLSIPFFANLSHASAIDPFAPPPYAPARGNPTVSYGDYLQHGLLDLIRANGQT</sequence>
<reference key="1">
    <citation type="journal article" date="1996" name="Appl. Microbiol. Biotechnol.">
        <title>Molecular analysis of the gene cluster involved in cephalosporin biosynthesis from Lysobacter lactamgenus YK90.</title>
        <authorList>
            <person name="Kimura H."/>
            <person name="Izawa M."/>
            <person name="Sumino Y."/>
        </authorList>
    </citation>
    <scope>NUCLEOTIDE SEQUENCE [GENOMIC DNA]</scope>
    <source>
        <strain>YK-90</strain>
    </source>
</reference>
<keyword id="KW-0045">Antibiotic biosynthesis</keyword>
<keyword id="KW-0408">Iron</keyword>
<keyword id="KW-0479">Metal-binding</keyword>
<keyword id="KW-0560">Oxidoreductase</keyword>
<keyword id="KW-0847">Vitamin C</keyword>
<feature type="chain" id="PRO_0000219501" description="Isopenicillin N synthase">
    <location>
        <begin position="1"/>
        <end position="326"/>
    </location>
</feature>
<feature type="domain" description="Fe2OG dioxygenase" evidence="2">
    <location>
        <begin position="183"/>
        <end position="283"/>
    </location>
</feature>
<feature type="binding site" evidence="1">
    <location>
        <position position="84"/>
    </location>
    <ligand>
        <name>isopenicillin N</name>
        <dbReference type="ChEBI" id="CHEBI:58399"/>
    </ligand>
</feature>
<feature type="binding site" evidence="1">
    <location>
        <position position="84"/>
    </location>
    <ligand>
        <name>N-[(5S)-5-amino-5-carboxypentanoyl]-L-cysteinyl-D-valine</name>
        <dbReference type="ChEBI" id="CHEBI:58572"/>
    </ligand>
</feature>
<feature type="binding site" evidence="1">
    <location>
        <position position="88"/>
    </location>
    <ligand>
        <name>isopenicillin N</name>
        <dbReference type="ChEBI" id="CHEBI:58399"/>
    </ligand>
</feature>
<feature type="binding site" evidence="1">
    <location>
        <position position="88"/>
    </location>
    <ligand>
        <name>N-[(5S)-5-amino-5-carboxypentanoyl]-L-cysteinyl-D-valine</name>
        <dbReference type="ChEBI" id="CHEBI:58572"/>
    </ligand>
</feature>
<feature type="binding site" evidence="1">
    <location>
        <position position="186"/>
    </location>
    <ligand>
        <name>isopenicillin N</name>
        <dbReference type="ChEBI" id="CHEBI:58399"/>
    </ligand>
</feature>
<feature type="binding site" evidence="1">
    <location>
        <position position="186"/>
    </location>
    <ligand>
        <name>N-[(5S)-5-amino-5-carboxypentanoyl]-L-cysteinyl-D-valine</name>
        <dbReference type="ChEBI" id="CHEBI:58572"/>
    </ligand>
</feature>
<feature type="binding site" evidence="2">
    <location>
        <position position="209"/>
    </location>
    <ligand>
        <name>Fe(2+)</name>
        <dbReference type="ChEBI" id="CHEBI:29033"/>
    </ligand>
</feature>
<feature type="binding site" evidence="1">
    <location>
        <position position="209"/>
    </location>
    <ligand>
        <name>N-[(5S)-5-amino-5-carboxypentanoyl]-L-cysteinyl-D-valine</name>
        <dbReference type="ChEBI" id="CHEBI:58572"/>
    </ligand>
</feature>
<feature type="binding site" evidence="2">
    <location>
        <position position="211"/>
    </location>
    <ligand>
        <name>Fe(2+)</name>
        <dbReference type="ChEBI" id="CHEBI:29033"/>
    </ligand>
</feature>
<feature type="binding site" evidence="1">
    <location>
        <position position="211"/>
    </location>
    <ligand>
        <name>N-[(5S)-5-amino-5-carboxypentanoyl]-L-cysteinyl-D-valine</name>
        <dbReference type="ChEBI" id="CHEBI:58572"/>
    </ligand>
</feature>
<feature type="binding site" evidence="2">
    <location>
        <position position="265"/>
    </location>
    <ligand>
        <name>Fe(2+)</name>
        <dbReference type="ChEBI" id="CHEBI:29033"/>
    </ligand>
</feature>
<feature type="binding site" evidence="2">
    <location>
        <position position="274"/>
    </location>
    <ligand>
        <name>2-oxoglutarate</name>
        <dbReference type="ChEBI" id="CHEBI:16810"/>
    </ligand>
</feature>
<feature type="binding site" evidence="1">
    <location>
        <position position="276"/>
    </location>
    <ligand>
        <name>isopenicillin N</name>
        <dbReference type="ChEBI" id="CHEBI:58399"/>
    </ligand>
</feature>
<feature type="binding site" evidence="1">
    <location>
        <position position="276"/>
    </location>
    <ligand>
        <name>N-[(5S)-5-amino-5-carboxypentanoyl]-L-cysteinyl-D-valine</name>
        <dbReference type="ChEBI" id="CHEBI:58572"/>
    </ligand>
</feature>
<dbReference type="EC" id="1.21.3.1"/>
<dbReference type="EMBL" id="X56660">
    <property type="protein sequence ID" value="CAA39983.1"/>
    <property type="molecule type" value="Genomic_DNA"/>
</dbReference>
<dbReference type="PIR" id="S54099">
    <property type="entry name" value="S54099"/>
</dbReference>
<dbReference type="SMR" id="Q48739"/>
<dbReference type="BRENDA" id="1.21.3.1">
    <property type="organism ID" value="3119"/>
</dbReference>
<dbReference type="UniPathway" id="UPA00149">
    <property type="reaction ID" value="UER00240"/>
</dbReference>
<dbReference type="GO" id="GO:0005506">
    <property type="term" value="F:iron ion binding"/>
    <property type="evidence" value="ECO:0007669"/>
    <property type="project" value="InterPro"/>
</dbReference>
<dbReference type="GO" id="GO:0016216">
    <property type="term" value="F:isopenicillin-N synthase activity"/>
    <property type="evidence" value="ECO:0007669"/>
    <property type="project" value="UniProtKB-EC"/>
</dbReference>
<dbReference type="GO" id="GO:0031418">
    <property type="term" value="F:L-ascorbic acid binding"/>
    <property type="evidence" value="ECO:0007669"/>
    <property type="project" value="UniProtKB-KW"/>
</dbReference>
<dbReference type="GO" id="GO:0017000">
    <property type="term" value="P:antibiotic biosynthetic process"/>
    <property type="evidence" value="ECO:0007669"/>
    <property type="project" value="UniProtKB-KW"/>
</dbReference>
<dbReference type="Gene3D" id="2.60.120.330">
    <property type="entry name" value="B-lactam Antibiotic, Isopenicillin N Synthase, Chain"/>
    <property type="match status" value="1"/>
</dbReference>
<dbReference type="InterPro" id="IPR026992">
    <property type="entry name" value="DIOX_N"/>
</dbReference>
<dbReference type="InterPro" id="IPR044861">
    <property type="entry name" value="IPNS-like_FE2OG_OXY"/>
</dbReference>
<dbReference type="InterPro" id="IPR027443">
    <property type="entry name" value="IPNS-like_sf"/>
</dbReference>
<dbReference type="InterPro" id="IPR002057">
    <property type="entry name" value="Isopenicillin-N_synth_CS"/>
</dbReference>
<dbReference type="InterPro" id="IPR005123">
    <property type="entry name" value="Oxoglu/Fe-dep_dioxygenase_dom"/>
</dbReference>
<dbReference type="InterPro" id="IPR050295">
    <property type="entry name" value="Plant_2OG-oxidoreductases"/>
</dbReference>
<dbReference type="PANTHER" id="PTHR47991">
    <property type="entry name" value="OXOGLUTARATE/IRON-DEPENDENT DIOXYGENASE"/>
    <property type="match status" value="1"/>
</dbReference>
<dbReference type="Pfam" id="PF03171">
    <property type="entry name" value="2OG-FeII_Oxy"/>
    <property type="match status" value="1"/>
</dbReference>
<dbReference type="Pfam" id="PF14226">
    <property type="entry name" value="DIOX_N"/>
    <property type="match status" value="1"/>
</dbReference>
<dbReference type="PRINTS" id="PR00682">
    <property type="entry name" value="IPNSYNTHASE"/>
</dbReference>
<dbReference type="SUPFAM" id="SSF51197">
    <property type="entry name" value="Clavaminate synthase-like"/>
    <property type="match status" value="1"/>
</dbReference>
<dbReference type="PROSITE" id="PS51471">
    <property type="entry name" value="FE2OG_OXY"/>
    <property type="match status" value="1"/>
</dbReference>
<dbReference type="PROSITE" id="PS00185">
    <property type="entry name" value="IPNS_1"/>
    <property type="match status" value="1"/>
</dbReference>
<dbReference type="PROSITE" id="PS00186">
    <property type="entry name" value="IPNS_2"/>
    <property type="match status" value="1"/>
</dbReference>
<proteinExistence type="inferred from homology"/>
<gene>
    <name type="primary">pcbC</name>
</gene>
<comment type="function">
    <text>Removes, in the presence of oxygen, 4 hydrogen atoms from delta-L-(alpha-aminoadipyl)-L-cysteinyl-D-valine (ACV) to form the azetidinone and thiazolidine rings of isopenicillin.</text>
</comment>
<comment type="catalytic activity">
    <reaction>
        <text>N-[(5S)-5-amino-5-carboxypentanoyl]-L-cysteinyl-D-valine + O2 = isopenicillin N + 2 H2O</text>
        <dbReference type="Rhea" id="RHEA:22428"/>
        <dbReference type="ChEBI" id="CHEBI:15377"/>
        <dbReference type="ChEBI" id="CHEBI:15379"/>
        <dbReference type="ChEBI" id="CHEBI:58399"/>
        <dbReference type="ChEBI" id="CHEBI:58572"/>
        <dbReference type="EC" id="1.21.3.1"/>
    </reaction>
</comment>
<comment type="cofactor">
    <cofactor>
        <name>Fe cation</name>
        <dbReference type="ChEBI" id="CHEBI:24875"/>
    </cofactor>
</comment>
<comment type="cofactor">
    <cofactor>
        <name>L-ascorbate</name>
        <dbReference type="ChEBI" id="CHEBI:38290"/>
    </cofactor>
</comment>
<comment type="pathway">
    <text>Antibiotic biosynthesis; penicillin G biosynthesis; penicillin G from L-alpha-aminoadipate and L-cysteine and L-valine: step 2/3.</text>
</comment>
<comment type="similarity">
    <text evidence="3">Belongs to the iron/ascorbate-dependent oxidoreductase family.</text>
</comment>
<evidence type="ECO:0000250" key="1">
    <source>
        <dbReference type="UniProtKB" id="P05326"/>
    </source>
</evidence>
<evidence type="ECO:0000255" key="2">
    <source>
        <dbReference type="PROSITE-ProRule" id="PRU00805"/>
    </source>
</evidence>
<evidence type="ECO:0000305" key="3"/>
<name>IPNS_LYSLA</name>
<protein>
    <recommendedName>
        <fullName>Isopenicillin N synthase</fullName>
        <shortName>IPNS</shortName>
        <ecNumber>1.21.3.1</ecNumber>
    </recommendedName>
</protein>
<accession>Q48739</accession>
<organism>
    <name type="scientific">Lysobacter lactamgenus</name>
    <dbReference type="NCBI Taxonomy" id="39596"/>
    <lineage>
        <taxon>Bacteria</taxon>
        <taxon>Pseudomonadati</taxon>
        <taxon>Pseudomonadota</taxon>
        <taxon>Gammaproteobacteria</taxon>
        <taxon>Lysobacterales</taxon>
        <taxon>Lysobacteraceae</taxon>
        <taxon>Lysobacter</taxon>
    </lineage>
</organism>